<feature type="chain" id="PRO_1000135568" description="Ion-translocating oxidoreductase complex subunit G">
    <location>
        <begin position="1"/>
        <end position="209"/>
    </location>
</feature>
<feature type="transmembrane region" description="Helical" evidence="1">
    <location>
        <begin position="9"/>
        <end position="29"/>
    </location>
</feature>
<feature type="modified residue" description="FMN phosphoryl threonine" evidence="1">
    <location>
        <position position="175"/>
    </location>
</feature>
<sequence length="209" mass="22540">MLNAIKKNGLVLAIFACASTGLVAVTHYLTKDQIKQQEQAQLLSVLNQVIPHDLHDNELFSSCTLVQAEELGTEQAMPAYIAKINGEPSAIAIEAIAPDGYNGAIKVIVGMKIDGTILGTRVLSHQETPGLGDKIDLRVSDWILSFAGKQVTDSNLDRWKVRKDGGDFDQFTGATITPRAVVKSVKQAVQYVNQNNQALLAQPLNCGGE</sequence>
<organism>
    <name type="scientific">Vibrio atlanticus (strain LGP32)</name>
    <name type="common">Vibrio splendidus (strain Mel32)</name>
    <dbReference type="NCBI Taxonomy" id="575788"/>
    <lineage>
        <taxon>Bacteria</taxon>
        <taxon>Pseudomonadati</taxon>
        <taxon>Pseudomonadota</taxon>
        <taxon>Gammaproteobacteria</taxon>
        <taxon>Vibrionales</taxon>
        <taxon>Vibrionaceae</taxon>
        <taxon>Vibrio</taxon>
    </lineage>
</organism>
<accession>B7VLT4</accession>
<evidence type="ECO:0000255" key="1">
    <source>
        <dbReference type="HAMAP-Rule" id="MF_00479"/>
    </source>
</evidence>
<reference key="1">
    <citation type="submission" date="2009-02" db="EMBL/GenBank/DDBJ databases">
        <title>Vibrio splendidus str. LGP32 complete genome.</title>
        <authorList>
            <person name="Mazel D."/>
            <person name="Le Roux F."/>
        </authorList>
    </citation>
    <scope>NUCLEOTIDE SEQUENCE [LARGE SCALE GENOMIC DNA]</scope>
    <source>
        <strain>LGP32</strain>
    </source>
</reference>
<gene>
    <name evidence="1" type="primary">rnfG</name>
    <name type="ordered locus">VS_0973</name>
</gene>
<keyword id="KW-0997">Cell inner membrane</keyword>
<keyword id="KW-1003">Cell membrane</keyword>
<keyword id="KW-0249">Electron transport</keyword>
<keyword id="KW-0285">Flavoprotein</keyword>
<keyword id="KW-0288">FMN</keyword>
<keyword id="KW-0472">Membrane</keyword>
<keyword id="KW-0597">Phosphoprotein</keyword>
<keyword id="KW-1278">Translocase</keyword>
<keyword id="KW-0812">Transmembrane</keyword>
<keyword id="KW-1133">Transmembrane helix</keyword>
<keyword id="KW-0813">Transport</keyword>
<dbReference type="EC" id="7.-.-.-" evidence="1"/>
<dbReference type="EMBL" id="FM954972">
    <property type="protein sequence ID" value="CAV17998.1"/>
    <property type="molecule type" value="Genomic_DNA"/>
</dbReference>
<dbReference type="SMR" id="B7VLT4"/>
<dbReference type="STRING" id="575788.VS_0973"/>
<dbReference type="KEGG" id="vsp:VS_0973"/>
<dbReference type="eggNOG" id="COG4659">
    <property type="taxonomic scope" value="Bacteria"/>
</dbReference>
<dbReference type="HOGENOM" id="CLU_077882_1_0_6"/>
<dbReference type="Proteomes" id="UP000009100">
    <property type="component" value="Chromosome 1"/>
</dbReference>
<dbReference type="GO" id="GO:0005886">
    <property type="term" value="C:plasma membrane"/>
    <property type="evidence" value="ECO:0007669"/>
    <property type="project" value="UniProtKB-SubCell"/>
</dbReference>
<dbReference type="GO" id="GO:0009055">
    <property type="term" value="F:electron transfer activity"/>
    <property type="evidence" value="ECO:0007669"/>
    <property type="project" value="InterPro"/>
</dbReference>
<dbReference type="GO" id="GO:0010181">
    <property type="term" value="F:FMN binding"/>
    <property type="evidence" value="ECO:0007669"/>
    <property type="project" value="InterPro"/>
</dbReference>
<dbReference type="GO" id="GO:0022900">
    <property type="term" value="P:electron transport chain"/>
    <property type="evidence" value="ECO:0007669"/>
    <property type="project" value="UniProtKB-UniRule"/>
</dbReference>
<dbReference type="HAMAP" id="MF_00479">
    <property type="entry name" value="RsxG_RnfG"/>
    <property type="match status" value="1"/>
</dbReference>
<dbReference type="InterPro" id="IPR007329">
    <property type="entry name" value="FMN-bd"/>
</dbReference>
<dbReference type="InterPro" id="IPR010209">
    <property type="entry name" value="Ion_transpt_RnfG/RsxG"/>
</dbReference>
<dbReference type="NCBIfam" id="NF002519">
    <property type="entry name" value="PRK01908.1"/>
    <property type="match status" value="1"/>
</dbReference>
<dbReference type="NCBIfam" id="TIGR01947">
    <property type="entry name" value="rnfG"/>
    <property type="match status" value="1"/>
</dbReference>
<dbReference type="PANTHER" id="PTHR36118">
    <property type="entry name" value="ION-TRANSLOCATING OXIDOREDUCTASE COMPLEX SUBUNIT G"/>
    <property type="match status" value="1"/>
</dbReference>
<dbReference type="PANTHER" id="PTHR36118:SF1">
    <property type="entry name" value="ION-TRANSLOCATING OXIDOREDUCTASE COMPLEX SUBUNIT G"/>
    <property type="match status" value="1"/>
</dbReference>
<dbReference type="Pfam" id="PF04205">
    <property type="entry name" value="FMN_bind"/>
    <property type="match status" value="1"/>
</dbReference>
<dbReference type="PIRSF" id="PIRSF006091">
    <property type="entry name" value="E_trnsport_RnfG"/>
    <property type="match status" value="1"/>
</dbReference>
<dbReference type="SMART" id="SM00900">
    <property type="entry name" value="FMN_bind"/>
    <property type="match status" value="1"/>
</dbReference>
<comment type="function">
    <text evidence="1">Part of a membrane-bound complex that couples electron transfer with translocation of ions across the membrane.</text>
</comment>
<comment type="cofactor">
    <cofactor evidence="1">
        <name>FMN</name>
        <dbReference type="ChEBI" id="CHEBI:58210"/>
    </cofactor>
</comment>
<comment type="subunit">
    <text evidence="1">The complex is composed of six subunits: RnfA, RnfB, RnfC, RnfD, RnfE and RnfG.</text>
</comment>
<comment type="subcellular location">
    <subcellularLocation>
        <location evidence="1">Cell inner membrane</location>
        <topology evidence="1">Single-pass membrane protein</topology>
    </subcellularLocation>
</comment>
<comment type="similarity">
    <text evidence="1">Belongs to the RnfG family.</text>
</comment>
<proteinExistence type="inferred from homology"/>
<name>RNFG_VIBA3</name>
<protein>
    <recommendedName>
        <fullName evidence="1">Ion-translocating oxidoreductase complex subunit G</fullName>
        <ecNumber evidence="1">7.-.-.-</ecNumber>
    </recommendedName>
    <alternativeName>
        <fullName evidence="1">Rnf electron transport complex subunit G</fullName>
    </alternativeName>
</protein>